<sequence length="205" mass="22500">MSAYRKGNIFIISAASGTGKTTLVSRLLANHNGLRVSVSHTTRPPREGEANGVHYHFVSKEEFESLIAQEAFLEYADVFGNYYGTGAEGVNALAAAGYDVILEIDVQGAAQVRDALPEAVGIFILPPSFDVLAARLNGRGTDSREVIQRRLSKARHEIEQSVLFDFVVVNDDLARAEEDLRHIVNACRLKRSRQLGFIADLLENS</sequence>
<gene>
    <name type="primary">gmk</name>
    <name type="ordered locus">NMB1661</name>
</gene>
<accession>Q9JYB5</accession>
<organism>
    <name type="scientific">Neisseria meningitidis serogroup B (strain ATCC BAA-335 / MC58)</name>
    <dbReference type="NCBI Taxonomy" id="122586"/>
    <lineage>
        <taxon>Bacteria</taxon>
        <taxon>Pseudomonadati</taxon>
        <taxon>Pseudomonadota</taxon>
        <taxon>Betaproteobacteria</taxon>
        <taxon>Neisseriales</taxon>
        <taxon>Neisseriaceae</taxon>
        <taxon>Neisseria</taxon>
    </lineage>
</organism>
<feature type="chain" id="PRO_0000170573" description="Guanylate kinase">
    <location>
        <begin position="1"/>
        <end position="205"/>
    </location>
</feature>
<feature type="domain" description="Guanylate kinase-like">
    <location>
        <begin position="7"/>
        <end position="185"/>
    </location>
</feature>
<feature type="binding site" evidence="1">
    <location>
        <begin position="14"/>
        <end position="21"/>
    </location>
    <ligand>
        <name>ATP</name>
        <dbReference type="ChEBI" id="CHEBI:30616"/>
    </ligand>
</feature>
<comment type="function">
    <text evidence="1">Essential for recycling GMP and indirectly, cGMP.</text>
</comment>
<comment type="catalytic activity">
    <reaction>
        <text>GMP + ATP = GDP + ADP</text>
        <dbReference type="Rhea" id="RHEA:20780"/>
        <dbReference type="ChEBI" id="CHEBI:30616"/>
        <dbReference type="ChEBI" id="CHEBI:58115"/>
        <dbReference type="ChEBI" id="CHEBI:58189"/>
        <dbReference type="ChEBI" id="CHEBI:456216"/>
        <dbReference type="EC" id="2.7.4.8"/>
    </reaction>
</comment>
<comment type="subcellular location">
    <subcellularLocation>
        <location evidence="1">Cytoplasm</location>
    </subcellularLocation>
</comment>
<comment type="similarity">
    <text evidence="2">Belongs to the guanylate kinase family.</text>
</comment>
<name>KGUA_NEIMB</name>
<protein>
    <recommendedName>
        <fullName>Guanylate kinase</fullName>
        <ecNumber>2.7.4.8</ecNumber>
    </recommendedName>
    <alternativeName>
        <fullName>GMP kinase</fullName>
    </alternativeName>
</protein>
<proteinExistence type="inferred from homology"/>
<keyword id="KW-0067">ATP-binding</keyword>
<keyword id="KW-0963">Cytoplasm</keyword>
<keyword id="KW-0418">Kinase</keyword>
<keyword id="KW-0547">Nucleotide-binding</keyword>
<keyword id="KW-1185">Reference proteome</keyword>
<keyword id="KW-0808">Transferase</keyword>
<reference key="1">
    <citation type="journal article" date="2000" name="Science">
        <title>Complete genome sequence of Neisseria meningitidis serogroup B strain MC58.</title>
        <authorList>
            <person name="Tettelin H."/>
            <person name="Saunders N.J."/>
            <person name="Heidelberg J.F."/>
            <person name="Jeffries A.C."/>
            <person name="Nelson K.E."/>
            <person name="Eisen J.A."/>
            <person name="Ketchum K.A."/>
            <person name="Hood D.W."/>
            <person name="Peden J.F."/>
            <person name="Dodson R.J."/>
            <person name="Nelson W.C."/>
            <person name="Gwinn M.L."/>
            <person name="DeBoy R.T."/>
            <person name="Peterson J.D."/>
            <person name="Hickey E.K."/>
            <person name="Haft D.H."/>
            <person name="Salzberg S.L."/>
            <person name="White O."/>
            <person name="Fleischmann R.D."/>
            <person name="Dougherty B.A."/>
            <person name="Mason T.M."/>
            <person name="Ciecko A."/>
            <person name="Parksey D.S."/>
            <person name="Blair E."/>
            <person name="Cittone H."/>
            <person name="Clark E.B."/>
            <person name="Cotton M.D."/>
            <person name="Utterback T.R."/>
            <person name="Khouri H.M."/>
            <person name="Qin H."/>
            <person name="Vamathevan J.J."/>
            <person name="Gill J."/>
            <person name="Scarlato V."/>
            <person name="Masignani V."/>
            <person name="Pizza M."/>
            <person name="Grandi G."/>
            <person name="Sun L."/>
            <person name="Smith H.O."/>
            <person name="Fraser C.M."/>
            <person name="Moxon E.R."/>
            <person name="Rappuoli R."/>
            <person name="Venter J.C."/>
        </authorList>
    </citation>
    <scope>NUCLEOTIDE SEQUENCE [LARGE SCALE GENOMIC DNA]</scope>
    <source>
        <strain>ATCC BAA-335 / MC58</strain>
    </source>
</reference>
<dbReference type="EC" id="2.7.4.8"/>
<dbReference type="EMBL" id="AE002098">
    <property type="protein sequence ID" value="AAF42010.1"/>
    <property type="molecule type" value="Genomic_DNA"/>
</dbReference>
<dbReference type="PIR" id="G81055">
    <property type="entry name" value="G81055"/>
</dbReference>
<dbReference type="RefSeq" id="NP_274666.1">
    <property type="nucleotide sequence ID" value="NC_003112.2"/>
</dbReference>
<dbReference type="RefSeq" id="WP_002222146.1">
    <property type="nucleotide sequence ID" value="NC_003112.2"/>
</dbReference>
<dbReference type="SMR" id="Q9JYB5"/>
<dbReference type="FunCoup" id="Q9JYB5">
    <property type="interactions" value="435"/>
</dbReference>
<dbReference type="STRING" id="122586.NMB1661"/>
<dbReference type="PaxDb" id="122586-NMB1661"/>
<dbReference type="KEGG" id="nme:NMB1661"/>
<dbReference type="PATRIC" id="fig|122586.8.peg.2138"/>
<dbReference type="HOGENOM" id="CLU_001715_1_2_4"/>
<dbReference type="InParanoid" id="Q9JYB5"/>
<dbReference type="OrthoDB" id="9808150at2"/>
<dbReference type="Proteomes" id="UP000000425">
    <property type="component" value="Chromosome"/>
</dbReference>
<dbReference type="GO" id="GO:0005829">
    <property type="term" value="C:cytosol"/>
    <property type="evidence" value="ECO:0000318"/>
    <property type="project" value="GO_Central"/>
</dbReference>
<dbReference type="GO" id="GO:0005524">
    <property type="term" value="F:ATP binding"/>
    <property type="evidence" value="ECO:0007669"/>
    <property type="project" value="UniProtKB-UniRule"/>
</dbReference>
<dbReference type="GO" id="GO:0004385">
    <property type="term" value="F:guanylate kinase activity"/>
    <property type="evidence" value="ECO:0000318"/>
    <property type="project" value="GO_Central"/>
</dbReference>
<dbReference type="CDD" id="cd00071">
    <property type="entry name" value="GMPK"/>
    <property type="match status" value="1"/>
</dbReference>
<dbReference type="FunFam" id="3.30.63.10:FF:000002">
    <property type="entry name" value="Guanylate kinase 1"/>
    <property type="match status" value="1"/>
</dbReference>
<dbReference type="Gene3D" id="3.30.63.10">
    <property type="entry name" value="Guanylate Kinase phosphate binding domain"/>
    <property type="match status" value="1"/>
</dbReference>
<dbReference type="Gene3D" id="3.40.50.300">
    <property type="entry name" value="P-loop containing nucleotide triphosphate hydrolases"/>
    <property type="match status" value="2"/>
</dbReference>
<dbReference type="HAMAP" id="MF_00328">
    <property type="entry name" value="Guanylate_kinase"/>
    <property type="match status" value="1"/>
</dbReference>
<dbReference type="InterPro" id="IPR008145">
    <property type="entry name" value="GK/Ca_channel_bsu"/>
</dbReference>
<dbReference type="InterPro" id="IPR008144">
    <property type="entry name" value="Guanylate_kin-like_dom"/>
</dbReference>
<dbReference type="InterPro" id="IPR017665">
    <property type="entry name" value="Guanylate_kinase"/>
</dbReference>
<dbReference type="InterPro" id="IPR020590">
    <property type="entry name" value="Guanylate_kinase_CS"/>
</dbReference>
<dbReference type="InterPro" id="IPR027417">
    <property type="entry name" value="P-loop_NTPase"/>
</dbReference>
<dbReference type="NCBIfam" id="TIGR03263">
    <property type="entry name" value="guanyl_kin"/>
    <property type="match status" value="1"/>
</dbReference>
<dbReference type="PANTHER" id="PTHR23117:SF13">
    <property type="entry name" value="GUANYLATE KINASE"/>
    <property type="match status" value="1"/>
</dbReference>
<dbReference type="PANTHER" id="PTHR23117">
    <property type="entry name" value="GUANYLATE KINASE-RELATED"/>
    <property type="match status" value="1"/>
</dbReference>
<dbReference type="Pfam" id="PF00625">
    <property type="entry name" value="Guanylate_kin"/>
    <property type="match status" value="1"/>
</dbReference>
<dbReference type="SMART" id="SM00072">
    <property type="entry name" value="GuKc"/>
    <property type="match status" value="1"/>
</dbReference>
<dbReference type="SUPFAM" id="SSF52540">
    <property type="entry name" value="P-loop containing nucleoside triphosphate hydrolases"/>
    <property type="match status" value="1"/>
</dbReference>
<dbReference type="PROSITE" id="PS00856">
    <property type="entry name" value="GUANYLATE_KINASE_1"/>
    <property type="match status" value="1"/>
</dbReference>
<dbReference type="PROSITE" id="PS50052">
    <property type="entry name" value="GUANYLATE_KINASE_2"/>
    <property type="match status" value="1"/>
</dbReference>
<evidence type="ECO:0000250" key="1"/>
<evidence type="ECO:0000305" key="2"/>